<sequence>MAKRPEDTRVVVGMSGGVDSSVAALLLKEQGYDVIGIFMKNWDDTDENGFCTATEDYEDVIKVCNQIGIPYYAVNFEKQYWEKVFQYFLDEYKAGRTPNPDVMCNKEIKFKAFLEHALSLGADYLATGHYARVDRTDGRVKMLRGLDENKDQTYFLNQLTEEQLSKVLFPIGQLQKSRVREIAKEAGLATAAKKDSTGICFIGERNFKTFLSQYLPAQPGDMRTMEGEFKGRHDGLMYYTIGQRHGLGIGGSGEPWFVVGKDLEKNILYVDQGFDNPLLFSDKITATNVSFVHKGVFGGEEELACTAKFRYRQADHEVTVRMTGTDEAEVVFKEPVRAVTPGQAVVFYKGEECLGGGTIDDVFKDGQQLWYV</sequence>
<proteinExistence type="inferred from homology"/>
<evidence type="ECO:0000255" key="1">
    <source>
        <dbReference type="HAMAP-Rule" id="MF_00144"/>
    </source>
</evidence>
<protein>
    <recommendedName>
        <fullName evidence="1">tRNA-specific 2-thiouridylase MnmA</fullName>
        <ecNumber evidence="1">2.8.1.13</ecNumber>
    </recommendedName>
</protein>
<dbReference type="EC" id="2.8.1.13" evidence="1"/>
<dbReference type="EMBL" id="AE017333">
    <property type="protein sequence ID" value="AAU41745.1"/>
    <property type="molecule type" value="Genomic_DNA"/>
</dbReference>
<dbReference type="EMBL" id="CP000002">
    <property type="protein sequence ID" value="AAU24382.1"/>
    <property type="molecule type" value="Genomic_DNA"/>
</dbReference>
<dbReference type="RefSeq" id="WP_003183938.1">
    <property type="nucleotide sequence ID" value="NC_006322.1"/>
</dbReference>
<dbReference type="SMR" id="Q65GR9"/>
<dbReference type="STRING" id="279010.BL02039"/>
<dbReference type="GeneID" id="92860530"/>
<dbReference type="KEGG" id="bld:BLi02875"/>
<dbReference type="KEGG" id="bli:BL02039"/>
<dbReference type="eggNOG" id="COG0482">
    <property type="taxonomic scope" value="Bacteria"/>
</dbReference>
<dbReference type="HOGENOM" id="CLU_035188_1_0_9"/>
<dbReference type="Proteomes" id="UP000000606">
    <property type="component" value="Chromosome"/>
</dbReference>
<dbReference type="GO" id="GO:0005737">
    <property type="term" value="C:cytoplasm"/>
    <property type="evidence" value="ECO:0007669"/>
    <property type="project" value="UniProtKB-SubCell"/>
</dbReference>
<dbReference type="GO" id="GO:0005524">
    <property type="term" value="F:ATP binding"/>
    <property type="evidence" value="ECO:0007669"/>
    <property type="project" value="UniProtKB-KW"/>
</dbReference>
<dbReference type="GO" id="GO:0000049">
    <property type="term" value="F:tRNA binding"/>
    <property type="evidence" value="ECO:0007669"/>
    <property type="project" value="UniProtKB-KW"/>
</dbReference>
<dbReference type="GO" id="GO:0103016">
    <property type="term" value="F:tRNA-uridine 2-sulfurtransferase activity"/>
    <property type="evidence" value="ECO:0007669"/>
    <property type="project" value="UniProtKB-EC"/>
</dbReference>
<dbReference type="GO" id="GO:0002143">
    <property type="term" value="P:tRNA wobble position uridine thiolation"/>
    <property type="evidence" value="ECO:0007669"/>
    <property type="project" value="TreeGrafter"/>
</dbReference>
<dbReference type="CDD" id="cd01998">
    <property type="entry name" value="MnmA_TRMU-like"/>
    <property type="match status" value="1"/>
</dbReference>
<dbReference type="FunFam" id="2.30.30.280:FF:000001">
    <property type="entry name" value="tRNA-specific 2-thiouridylase MnmA"/>
    <property type="match status" value="1"/>
</dbReference>
<dbReference type="FunFam" id="2.40.30.10:FF:000023">
    <property type="entry name" value="tRNA-specific 2-thiouridylase MnmA"/>
    <property type="match status" value="1"/>
</dbReference>
<dbReference type="FunFam" id="3.40.50.620:FF:000004">
    <property type="entry name" value="tRNA-specific 2-thiouridylase MnmA"/>
    <property type="match status" value="1"/>
</dbReference>
<dbReference type="Gene3D" id="2.30.30.280">
    <property type="entry name" value="Adenine nucleotide alpha hydrolases-like domains"/>
    <property type="match status" value="1"/>
</dbReference>
<dbReference type="Gene3D" id="3.40.50.620">
    <property type="entry name" value="HUPs"/>
    <property type="match status" value="1"/>
</dbReference>
<dbReference type="Gene3D" id="2.40.30.10">
    <property type="entry name" value="Translation factors"/>
    <property type="match status" value="1"/>
</dbReference>
<dbReference type="HAMAP" id="MF_00144">
    <property type="entry name" value="tRNA_thiouridyl_MnmA"/>
    <property type="match status" value="1"/>
</dbReference>
<dbReference type="InterPro" id="IPR004506">
    <property type="entry name" value="MnmA-like"/>
</dbReference>
<dbReference type="InterPro" id="IPR046885">
    <property type="entry name" value="MnmA-like_C"/>
</dbReference>
<dbReference type="InterPro" id="IPR046884">
    <property type="entry name" value="MnmA-like_central"/>
</dbReference>
<dbReference type="InterPro" id="IPR023382">
    <property type="entry name" value="MnmA-like_central_sf"/>
</dbReference>
<dbReference type="InterPro" id="IPR014729">
    <property type="entry name" value="Rossmann-like_a/b/a_fold"/>
</dbReference>
<dbReference type="NCBIfam" id="NF001138">
    <property type="entry name" value="PRK00143.1"/>
    <property type="match status" value="1"/>
</dbReference>
<dbReference type="NCBIfam" id="TIGR00420">
    <property type="entry name" value="trmU"/>
    <property type="match status" value="1"/>
</dbReference>
<dbReference type="PANTHER" id="PTHR11933:SF5">
    <property type="entry name" value="MITOCHONDRIAL TRNA-SPECIFIC 2-THIOURIDYLASE 1"/>
    <property type="match status" value="1"/>
</dbReference>
<dbReference type="PANTHER" id="PTHR11933">
    <property type="entry name" value="TRNA 5-METHYLAMINOMETHYL-2-THIOURIDYLATE -METHYLTRANSFERASE"/>
    <property type="match status" value="1"/>
</dbReference>
<dbReference type="Pfam" id="PF03054">
    <property type="entry name" value="tRNA_Me_trans"/>
    <property type="match status" value="1"/>
</dbReference>
<dbReference type="Pfam" id="PF20258">
    <property type="entry name" value="tRNA_Me_trans_C"/>
    <property type="match status" value="1"/>
</dbReference>
<dbReference type="Pfam" id="PF20259">
    <property type="entry name" value="tRNA_Me_trans_M"/>
    <property type="match status" value="1"/>
</dbReference>
<dbReference type="SUPFAM" id="SSF52402">
    <property type="entry name" value="Adenine nucleotide alpha hydrolases-like"/>
    <property type="match status" value="1"/>
</dbReference>
<gene>
    <name evidence="1" type="primary">mnmA</name>
    <name type="synonym">trmU</name>
    <name type="ordered locus">BLi02875</name>
    <name type="ordered locus">BL02039</name>
</gene>
<keyword id="KW-0067">ATP-binding</keyword>
<keyword id="KW-0963">Cytoplasm</keyword>
<keyword id="KW-1015">Disulfide bond</keyword>
<keyword id="KW-0547">Nucleotide-binding</keyword>
<keyword id="KW-1185">Reference proteome</keyword>
<keyword id="KW-0694">RNA-binding</keyword>
<keyword id="KW-0808">Transferase</keyword>
<keyword id="KW-0819">tRNA processing</keyword>
<keyword id="KW-0820">tRNA-binding</keyword>
<name>MNMA_BACLD</name>
<organism>
    <name type="scientific">Bacillus licheniformis (strain ATCC 14580 / DSM 13 / JCM 2505 / CCUG 7422 / NBRC 12200 / NCIMB 9375 / NCTC 10341 / NRRL NRS-1264 / Gibson 46)</name>
    <dbReference type="NCBI Taxonomy" id="279010"/>
    <lineage>
        <taxon>Bacteria</taxon>
        <taxon>Bacillati</taxon>
        <taxon>Bacillota</taxon>
        <taxon>Bacilli</taxon>
        <taxon>Bacillales</taxon>
        <taxon>Bacillaceae</taxon>
        <taxon>Bacillus</taxon>
    </lineage>
</organism>
<reference key="1">
    <citation type="journal article" date="2004" name="J. Mol. Microbiol. Biotechnol.">
        <title>The complete genome sequence of Bacillus licheniformis DSM13, an organism with great industrial potential.</title>
        <authorList>
            <person name="Veith B."/>
            <person name="Herzberg C."/>
            <person name="Steckel S."/>
            <person name="Feesche J."/>
            <person name="Maurer K.H."/>
            <person name="Ehrenreich P."/>
            <person name="Baeumer S."/>
            <person name="Henne A."/>
            <person name="Liesegang H."/>
            <person name="Merkl R."/>
            <person name="Ehrenreich A."/>
            <person name="Gottschalk G."/>
        </authorList>
    </citation>
    <scope>NUCLEOTIDE SEQUENCE [LARGE SCALE GENOMIC DNA]</scope>
    <source>
        <strain>ATCC 14580 / DSM 13 / JCM 2505 / CCUG 7422 / NBRC 12200 / NCIMB 9375 / NCTC 10341 / NRRL NRS-1264 / Gibson 46</strain>
    </source>
</reference>
<reference key="2">
    <citation type="journal article" date="2004" name="Genome Biol.">
        <title>Complete genome sequence of the industrial bacterium Bacillus licheniformis and comparisons with closely related Bacillus species.</title>
        <authorList>
            <person name="Rey M.W."/>
            <person name="Ramaiya P."/>
            <person name="Nelson B.A."/>
            <person name="Brody-Karpin S.D."/>
            <person name="Zaretsky E.J."/>
            <person name="Tang M."/>
            <person name="Lopez de Leon A."/>
            <person name="Xiang H."/>
            <person name="Gusti V."/>
            <person name="Clausen I.G."/>
            <person name="Olsen P.B."/>
            <person name="Rasmussen M.D."/>
            <person name="Andersen J.T."/>
            <person name="Joergensen P.L."/>
            <person name="Larsen T.S."/>
            <person name="Sorokin A."/>
            <person name="Bolotin A."/>
            <person name="Lapidus A."/>
            <person name="Galleron N."/>
            <person name="Ehrlich S.D."/>
            <person name="Berka R.M."/>
        </authorList>
    </citation>
    <scope>NUCLEOTIDE SEQUENCE [LARGE SCALE GENOMIC DNA]</scope>
    <source>
        <strain>ATCC 14580 / DSM 13 / JCM 2505 / CCUG 7422 / NBRC 12200 / NCIMB 9375 / NCTC 10341 / NRRL NRS-1264 / Gibson 46</strain>
    </source>
</reference>
<comment type="function">
    <text evidence="1">Catalyzes the 2-thiolation of uridine at the wobble position (U34) of tRNA, leading to the formation of s(2)U34.</text>
</comment>
<comment type="catalytic activity">
    <reaction evidence="1">
        <text>S-sulfanyl-L-cysteinyl-[protein] + uridine(34) in tRNA + AH2 + ATP = 2-thiouridine(34) in tRNA + L-cysteinyl-[protein] + A + AMP + diphosphate + H(+)</text>
        <dbReference type="Rhea" id="RHEA:47032"/>
        <dbReference type="Rhea" id="RHEA-COMP:10131"/>
        <dbReference type="Rhea" id="RHEA-COMP:11726"/>
        <dbReference type="Rhea" id="RHEA-COMP:11727"/>
        <dbReference type="Rhea" id="RHEA-COMP:11728"/>
        <dbReference type="ChEBI" id="CHEBI:13193"/>
        <dbReference type="ChEBI" id="CHEBI:15378"/>
        <dbReference type="ChEBI" id="CHEBI:17499"/>
        <dbReference type="ChEBI" id="CHEBI:29950"/>
        <dbReference type="ChEBI" id="CHEBI:30616"/>
        <dbReference type="ChEBI" id="CHEBI:33019"/>
        <dbReference type="ChEBI" id="CHEBI:61963"/>
        <dbReference type="ChEBI" id="CHEBI:65315"/>
        <dbReference type="ChEBI" id="CHEBI:87170"/>
        <dbReference type="ChEBI" id="CHEBI:456215"/>
        <dbReference type="EC" id="2.8.1.13"/>
    </reaction>
</comment>
<comment type="subcellular location">
    <subcellularLocation>
        <location evidence="1">Cytoplasm</location>
    </subcellularLocation>
</comment>
<comment type="similarity">
    <text evidence="1">Belongs to the MnmA/TRMU family.</text>
</comment>
<feature type="chain" id="PRO_0000121608" description="tRNA-specific 2-thiouridylase MnmA">
    <location>
        <begin position="1"/>
        <end position="372"/>
    </location>
</feature>
<feature type="region of interest" description="Interaction with target base in tRNA" evidence="1">
    <location>
        <begin position="99"/>
        <end position="101"/>
    </location>
</feature>
<feature type="region of interest" description="Interaction with tRNA" evidence="1">
    <location>
        <begin position="150"/>
        <end position="152"/>
    </location>
</feature>
<feature type="region of interest" description="Interaction with tRNA" evidence="1">
    <location>
        <begin position="310"/>
        <end position="311"/>
    </location>
</feature>
<feature type="active site" description="Nucleophile" evidence="1">
    <location>
        <position position="104"/>
    </location>
</feature>
<feature type="active site" description="Cysteine persulfide intermediate" evidence="1">
    <location>
        <position position="200"/>
    </location>
</feature>
<feature type="binding site" evidence="1">
    <location>
        <begin position="13"/>
        <end position="20"/>
    </location>
    <ligand>
        <name>ATP</name>
        <dbReference type="ChEBI" id="CHEBI:30616"/>
    </ligand>
</feature>
<feature type="binding site" evidence="1">
    <location>
        <position position="39"/>
    </location>
    <ligand>
        <name>ATP</name>
        <dbReference type="ChEBI" id="CHEBI:30616"/>
    </ligand>
</feature>
<feature type="binding site" evidence="1">
    <location>
        <position position="128"/>
    </location>
    <ligand>
        <name>ATP</name>
        <dbReference type="ChEBI" id="CHEBI:30616"/>
    </ligand>
</feature>
<feature type="site" description="Interaction with tRNA" evidence="1">
    <location>
        <position position="129"/>
    </location>
</feature>
<feature type="site" description="Interaction with tRNA" evidence="1">
    <location>
        <position position="343"/>
    </location>
</feature>
<feature type="disulfide bond" description="Alternate" evidence="1">
    <location>
        <begin position="104"/>
        <end position="200"/>
    </location>
</feature>
<accession>Q65GR9</accession>
<accession>Q62S78</accession>